<accession>B0B9T2</accession>
<accession>O84185</accession>
<accession>Q59320</accession>
<name>KDSB_CHLT2</name>
<dbReference type="EC" id="2.7.7.38" evidence="1"/>
<dbReference type="EMBL" id="U15192">
    <property type="protein sequence ID" value="AAA80194.1"/>
    <property type="molecule type" value="Genomic_DNA"/>
</dbReference>
<dbReference type="EMBL" id="AM884176">
    <property type="protein sequence ID" value="CAP03873.1"/>
    <property type="molecule type" value="Genomic_DNA"/>
</dbReference>
<dbReference type="PIR" id="A56447">
    <property type="entry name" value="A56447"/>
</dbReference>
<dbReference type="RefSeq" id="WP_009873621.1">
    <property type="nucleotide sequence ID" value="NC_010287.1"/>
</dbReference>
<dbReference type="RefSeq" id="YP_001654510.1">
    <property type="nucleotide sequence ID" value="NC_010287.1"/>
</dbReference>
<dbReference type="SMR" id="B0B9T2"/>
<dbReference type="KEGG" id="ctb:CTL0434"/>
<dbReference type="PATRIC" id="fig|471472.4.peg.469"/>
<dbReference type="HOGENOM" id="CLU_065038_0_1_0"/>
<dbReference type="UniPathway" id="UPA00030"/>
<dbReference type="UniPathway" id="UPA00358">
    <property type="reaction ID" value="UER00476"/>
</dbReference>
<dbReference type="Proteomes" id="UP001154402">
    <property type="component" value="Chromosome"/>
</dbReference>
<dbReference type="GO" id="GO:0005829">
    <property type="term" value="C:cytosol"/>
    <property type="evidence" value="ECO:0007669"/>
    <property type="project" value="TreeGrafter"/>
</dbReference>
<dbReference type="GO" id="GO:0008690">
    <property type="term" value="F:3-deoxy-manno-octulosonate cytidylyltransferase activity"/>
    <property type="evidence" value="ECO:0007669"/>
    <property type="project" value="UniProtKB-UniRule"/>
</dbReference>
<dbReference type="GO" id="GO:0033468">
    <property type="term" value="P:CMP-keto-3-deoxy-D-manno-octulosonic acid biosynthetic process"/>
    <property type="evidence" value="ECO:0007669"/>
    <property type="project" value="UniProtKB-UniRule"/>
</dbReference>
<dbReference type="GO" id="GO:0009103">
    <property type="term" value="P:lipopolysaccharide biosynthetic process"/>
    <property type="evidence" value="ECO:0007669"/>
    <property type="project" value="UniProtKB-UniRule"/>
</dbReference>
<dbReference type="CDD" id="cd02517">
    <property type="entry name" value="CMP-KDO-Synthetase"/>
    <property type="match status" value="1"/>
</dbReference>
<dbReference type="FunFam" id="3.90.550.10:FF:000011">
    <property type="entry name" value="3-deoxy-manno-octulosonate cytidylyltransferase"/>
    <property type="match status" value="1"/>
</dbReference>
<dbReference type="Gene3D" id="3.90.550.10">
    <property type="entry name" value="Spore Coat Polysaccharide Biosynthesis Protein SpsA, Chain A"/>
    <property type="match status" value="1"/>
</dbReference>
<dbReference type="HAMAP" id="MF_00057">
    <property type="entry name" value="KdsB"/>
    <property type="match status" value="1"/>
</dbReference>
<dbReference type="InterPro" id="IPR003329">
    <property type="entry name" value="Cytidylyl_trans"/>
</dbReference>
<dbReference type="InterPro" id="IPR004528">
    <property type="entry name" value="KdsB"/>
</dbReference>
<dbReference type="InterPro" id="IPR029044">
    <property type="entry name" value="Nucleotide-diphossugar_trans"/>
</dbReference>
<dbReference type="NCBIfam" id="TIGR00466">
    <property type="entry name" value="kdsB"/>
    <property type="match status" value="1"/>
</dbReference>
<dbReference type="NCBIfam" id="NF003950">
    <property type="entry name" value="PRK05450.1-3"/>
    <property type="match status" value="1"/>
</dbReference>
<dbReference type="NCBIfam" id="NF003952">
    <property type="entry name" value="PRK05450.1-5"/>
    <property type="match status" value="1"/>
</dbReference>
<dbReference type="PANTHER" id="PTHR42866">
    <property type="entry name" value="3-DEOXY-MANNO-OCTULOSONATE CYTIDYLYLTRANSFERASE"/>
    <property type="match status" value="1"/>
</dbReference>
<dbReference type="PANTHER" id="PTHR42866:SF2">
    <property type="entry name" value="3-DEOXY-MANNO-OCTULOSONATE CYTIDYLYLTRANSFERASE, MITOCHONDRIAL"/>
    <property type="match status" value="1"/>
</dbReference>
<dbReference type="Pfam" id="PF02348">
    <property type="entry name" value="CTP_transf_3"/>
    <property type="match status" value="1"/>
</dbReference>
<dbReference type="SUPFAM" id="SSF53448">
    <property type="entry name" value="Nucleotide-diphospho-sugar transferases"/>
    <property type="match status" value="1"/>
</dbReference>
<reference key="1">
    <citation type="journal article" date="1995" name="J. Biol. Chem.">
        <title>Cloning and expression of the Chlamydia trachomatis gene for CTP synthetase.</title>
        <authorList>
            <person name="Tipples G."/>
            <person name="McClarty G."/>
        </authorList>
    </citation>
    <scope>NUCLEOTIDE SEQUENCE [GENOMIC DNA]</scope>
</reference>
<reference key="2">
    <citation type="journal article" date="2008" name="Genome Res.">
        <title>Chlamydia trachomatis: genome sequence analysis of lymphogranuloma venereum isolates.</title>
        <authorList>
            <person name="Thomson N.R."/>
            <person name="Holden M.T.G."/>
            <person name="Carder C."/>
            <person name="Lennard N."/>
            <person name="Lockey S.J."/>
            <person name="Marsh P."/>
            <person name="Skipp P."/>
            <person name="O'Connor C.D."/>
            <person name="Goodhead I."/>
            <person name="Norbertzcak H."/>
            <person name="Harris B."/>
            <person name="Ormond D."/>
            <person name="Rance R."/>
            <person name="Quail M.A."/>
            <person name="Parkhill J."/>
            <person name="Stephens R.S."/>
            <person name="Clarke I.N."/>
        </authorList>
    </citation>
    <scope>NUCLEOTIDE SEQUENCE [LARGE SCALE GENOMIC DNA]</scope>
    <source>
        <strain>ATCC VR-902B / DSM 19102 / 434/Bu</strain>
    </source>
</reference>
<gene>
    <name evidence="1" type="primary">kdsB</name>
    <name type="ordered locus">CTL0434</name>
</gene>
<comment type="function">
    <text evidence="1">Activates KDO (a required 8-carbon sugar) for incorporation into bacterial lipopolysaccharide in Gram-negative bacteria.</text>
</comment>
<comment type="catalytic activity">
    <reaction evidence="1">
        <text>3-deoxy-alpha-D-manno-oct-2-ulosonate + CTP = CMP-3-deoxy-beta-D-manno-octulosonate + diphosphate</text>
        <dbReference type="Rhea" id="RHEA:23448"/>
        <dbReference type="ChEBI" id="CHEBI:33019"/>
        <dbReference type="ChEBI" id="CHEBI:37563"/>
        <dbReference type="ChEBI" id="CHEBI:85986"/>
        <dbReference type="ChEBI" id="CHEBI:85987"/>
        <dbReference type="EC" id="2.7.7.38"/>
    </reaction>
</comment>
<comment type="pathway">
    <text evidence="1">Nucleotide-sugar biosynthesis; CMP-3-deoxy-D-manno-octulosonate biosynthesis; CMP-3-deoxy-D-manno-octulosonate from 3-deoxy-D-manno-octulosonate and CTP: step 1/1.</text>
</comment>
<comment type="pathway">
    <text evidence="1">Bacterial outer membrane biogenesis; lipopolysaccharide biosynthesis.</text>
</comment>
<comment type="subcellular location">
    <subcellularLocation>
        <location evidence="1">Cytoplasm</location>
    </subcellularLocation>
</comment>
<comment type="similarity">
    <text evidence="1">Belongs to the KdsB family.</text>
</comment>
<evidence type="ECO:0000255" key="1">
    <source>
        <dbReference type="HAMAP-Rule" id="MF_00057"/>
    </source>
</evidence>
<feature type="chain" id="PRO_1000091864" description="3-deoxy-manno-octulosonate cytidylyltransferase">
    <location>
        <begin position="1"/>
        <end position="254"/>
    </location>
</feature>
<protein>
    <recommendedName>
        <fullName evidence="1">3-deoxy-manno-octulosonate cytidylyltransferase</fullName>
        <ecNumber evidence="1">2.7.7.38</ecNumber>
    </recommendedName>
    <alternativeName>
        <fullName evidence="1">CMP-2-keto-3-deoxyoctulosonic acid synthase</fullName>
        <shortName evidence="1">CKS</shortName>
        <shortName evidence="1">CMP-KDO synthase</shortName>
    </alternativeName>
</protein>
<organism>
    <name type="scientific">Chlamydia trachomatis serovar L2 (strain ATCC VR-902B / DSM 19102 / 434/Bu)</name>
    <dbReference type="NCBI Taxonomy" id="471472"/>
    <lineage>
        <taxon>Bacteria</taxon>
        <taxon>Pseudomonadati</taxon>
        <taxon>Chlamydiota</taxon>
        <taxon>Chlamydiia</taxon>
        <taxon>Chlamydiales</taxon>
        <taxon>Chlamydiaceae</taxon>
        <taxon>Chlamydia/Chlamydophila group</taxon>
        <taxon>Chlamydia</taxon>
    </lineage>
</organism>
<proteinExistence type="inferred from homology"/>
<keyword id="KW-0963">Cytoplasm</keyword>
<keyword id="KW-0448">Lipopolysaccharide biosynthesis</keyword>
<keyword id="KW-0548">Nucleotidyltransferase</keyword>
<keyword id="KW-0808">Transferase</keyword>
<sequence>MFAFLTSKKVGILPSRWGSSRFPGKPLAKILGKTLVQRSYENALSSQSLDCVVVATDDQRIFDHVVEFGGLCVMTSTSCANGTERVEEVVSRHFPQAEIVVNIQGDEPCLSPTVIDGLVSTLENNPAADMVTPVTETTDPEAILTDHKVKCVFDKNGKALYFSRSAIPHNFKHPTPIYLHIGVYAFRKAFLSEYVKIPPSSLSLAEDLEQLRVLETGRSIYVHVVQNATGPSVDYPEDITKVEQYLLCLSKASF</sequence>